<organism>
    <name type="scientific">Burkholderia mallei (strain NCTC 10229)</name>
    <dbReference type="NCBI Taxonomy" id="412022"/>
    <lineage>
        <taxon>Bacteria</taxon>
        <taxon>Pseudomonadati</taxon>
        <taxon>Pseudomonadota</taxon>
        <taxon>Betaproteobacteria</taxon>
        <taxon>Burkholderiales</taxon>
        <taxon>Burkholderiaceae</taxon>
        <taxon>Burkholderia</taxon>
        <taxon>pseudomallei group</taxon>
    </lineage>
</organism>
<gene>
    <name evidence="1" type="primary">dapD</name>
    <name type="ordered locus">BMA10229_A3243</name>
</gene>
<reference key="1">
    <citation type="journal article" date="2010" name="Genome Biol. Evol.">
        <title>Continuing evolution of Burkholderia mallei through genome reduction and large-scale rearrangements.</title>
        <authorList>
            <person name="Losada L."/>
            <person name="Ronning C.M."/>
            <person name="DeShazer D."/>
            <person name="Woods D."/>
            <person name="Fedorova N."/>
            <person name="Kim H.S."/>
            <person name="Shabalina S.A."/>
            <person name="Pearson T.R."/>
            <person name="Brinkac L."/>
            <person name="Tan P."/>
            <person name="Nandi T."/>
            <person name="Crabtree J."/>
            <person name="Badger J."/>
            <person name="Beckstrom-Sternberg S."/>
            <person name="Saqib M."/>
            <person name="Schutzer S.E."/>
            <person name="Keim P."/>
            <person name="Nierman W.C."/>
        </authorList>
    </citation>
    <scope>NUCLEOTIDE SEQUENCE [LARGE SCALE GENOMIC DNA]</scope>
    <source>
        <strain>NCTC 10229</strain>
    </source>
</reference>
<comment type="catalytic activity">
    <reaction evidence="1">
        <text>(S)-2,3,4,5-tetrahydrodipicolinate + succinyl-CoA + H2O = (S)-2-succinylamino-6-oxoheptanedioate + CoA</text>
        <dbReference type="Rhea" id="RHEA:17325"/>
        <dbReference type="ChEBI" id="CHEBI:15377"/>
        <dbReference type="ChEBI" id="CHEBI:15685"/>
        <dbReference type="ChEBI" id="CHEBI:16845"/>
        <dbReference type="ChEBI" id="CHEBI:57287"/>
        <dbReference type="ChEBI" id="CHEBI:57292"/>
        <dbReference type="EC" id="2.3.1.117"/>
    </reaction>
</comment>
<comment type="pathway">
    <text evidence="1">Amino-acid biosynthesis; L-lysine biosynthesis via DAP pathway; LL-2,6-diaminopimelate from (S)-tetrahydrodipicolinate (succinylase route): step 1/3.</text>
</comment>
<comment type="subunit">
    <text evidence="1">Homotrimer.</text>
</comment>
<comment type="subcellular location">
    <subcellularLocation>
        <location evidence="1">Cytoplasm</location>
    </subcellularLocation>
</comment>
<comment type="similarity">
    <text evidence="1">Belongs to the transferase hexapeptide repeat family.</text>
</comment>
<sequence>MSQQLQQIIDNAWENRAELSPKAASAEIREAVAHAIEQLDRGALRVAEKIDGAWTVHQWLKKAVLLSFRLEDNAPMPAGGYSQFYDKVPSKFANYTAEDFAAGGFRVVPPAIARRGSFIAKNVVLMPSYTNIGAYVDEGTMVDTWATVGSCAQIGKNVHLSGGVGIGGVLEPLQANPVIIEDNCFIGARSEVVEGVIVEENSVISMGVYLGQSTKIYDRETGEVTYGRIPAGSVVVAGNLPAKDGTHSLYCAVIVKKVDAKTRAKVGLNELLRGD</sequence>
<name>DAPD_BURM9</name>
<dbReference type="EC" id="2.3.1.117" evidence="1"/>
<dbReference type="EMBL" id="CP000546">
    <property type="protein sequence ID" value="ABN02659.1"/>
    <property type="molecule type" value="Genomic_DNA"/>
</dbReference>
<dbReference type="RefSeq" id="WP_004191680.1">
    <property type="nucleotide sequence ID" value="NC_008836.1"/>
</dbReference>
<dbReference type="SMR" id="A2SB60"/>
<dbReference type="GeneID" id="92979291"/>
<dbReference type="KEGG" id="bml:BMA10229_A3243"/>
<dbReference type="HOGENOM" id="CLU_050859_0_1_4"/>
<dbReference type="UniPathway" id="UPA00034">
    <property type="reaction ID" value="UER00019"/>
</dbReference>
<dbReference type="Proteomes" id="UP000002283">
    <property type="component" value="Chromosome I"/>
</dbReference>
<dbReference type="GO" id="GO:0005737">
    <property type="term" value="C:cytoplasm"/>
    <property type="evidence" value="ECO:0007669"/>
    <property type="project" value="UniProtKB-SubCell"/>
</dbReference>
<dbReference type="GO" id="GO:0008666">
    <property type="term" value="F:2,3,4,5-tetrahydropyridine-2,6-dicarboxylate N-succinyltransferase activity"/>
    <property type="evidence" value="ECO:0007669"/>
    <property type="project" value="UniProtKB-UniRule"/>
</dbReference>
<dbReference type="GO" id="GO:0016779">
    <property type="term" value="F:nucleotidyltransferase activity"/>
    <property type="evidence" value="ECO:0007669"/>
    <property type="project" value="TreeGrafter"/>
</dbReference>
<dbReference type="GO" id="GO:0019877">
    <property type="term" value="P:diaminopimelate biosynthetic process"/>
    <property type="evidence" value="ECO:0007669"/>
    <property type="project" value="UniProtKB-UniRule"/>
</dbReference>
<dbReference type="GO" id="GO:0009089">
    <property type="term" value="P:lysine biosynthetic process via diaminopimelate"/>
    <property type="evidence" value="ECO:0007669"/>
    <property type="project" value="UniProtKB-UniRule"/>
</dbReference>
<dbReference type="CDD" id="cd03350">
    <property type="entry name" value="LbH_THP_succinylT"/>
    <property type="match status" value="1"/>
</dbReference>
<dbReference type="Gene3D" id="2.160.10.10">
    <property type="entry name" value="Hexapeptide repeat proteins"/>
    <property type="match status" value="1"/>
</dbReference>
<dbReference type="Gene3D" id="1.10.166.10">
    <property type="entry name" value="Tetrahydrodipicolinate-N-succinyltransferase, N-terminal domain"/>
    <property type="match status" value="1"/>
</dbReference>
<dbReference type="HAMAP" id="MF_00811">
    <property type="entry name" value="DapD"/>
    <property type="match status" value="1"/>
</dbReference>
<dbReference type="InterPro" id="IPR005664">
    <property type="entry name" value="DapD_Trfase_Hexpep_rpt_fam"/>
</dbReference>
<dbReference type="InterPro" id="IPR001451">
    <property type="entry name" value="Hexapep"/>
</dbReference>
<dbReference type="InterPro" id="IPR018357">
    <property type="entry name" value="Hexapep_transf_CS"/>
</dbReference>
<dbReference type="InterPro" id="IPR023180">
    <property type="entry name" value="THP_succinylTrfase_dom1"/>
</dbReference>
<dbReference type="InterPro" id="IPR037133">
    <property type="entry name" value="THP_succinylTrfase_N_sf"/>
</dbReference>
<dbReference type="InterPro" id="IPR011004">
    <property type="entry name" value="Trimer_LpxA-like_sf"/>
</dbReference>
<dbReference type="NCBIfam" id="TIGR00965">
    <property type="entry name" value="dapD"/>
    <property type="match status" value="1"/>
</dbReference>
<dbReference type="NCBIfam" id="NF008808">
    <property type="entry name" value="PRK11830.1"/>
    <property type="match status" value="1"/>
</dbReference>
<dbReference type="PANTHER" id="PTHR19136:SF52">
    <property type="entry name" value="2,3,4,5-TETRAHYDROPYRIDINE-2,6-DICARBOXYLATE N-SUCCINYLTRANSFERASE"/>
    <property type="match status" value="1"/>
</dbReference>
<dbReference type="PANTHER" id="PTHR19136">
    <property type="entry name" value="MOLYBDENUM COFACTOR GUANYLYLTRANSFERASE"/>
    <property type="match status" value="1"/>
</dbReference>
<dbReference type="Pfam" id="PF14602">
    <property type="entry name" value="Hexapep_2"/>
    <property type="match status" value="1"/>
</dbReference>
<dbReference type="Pfam" id="PF14805">
    <property type="entry name" value="THDPS_N_2"/>
    <property type="match status" value="1"/>
</dbReference>
<dbReference type="SUPFAM" id="SSF51161">
    <property type="entry name" value="Trimeric LpxA-like enzymes"/>
    <property type="match status" value="1"/>
</dbReference>
<dbReference type="PROSITE" id="PS00101">
    <property type="entry name" value="HEXAPEP_TRANSFERASES"/>
    <property type="match status" value="1"/>
</dbReference>
<protein>
    <recommendedName>
        <fullName evidence="1">2,3,4,5-tetrahydropyridine-2,6-dicarboxylate N-succinyltransferase</fullName>
        <ecNumber evidence="1">2.3.1.117</ecNumber>
    </recommendedName>
    <alternativeName>
        <fullName evidence="1">Tetrahydrodipicolinate N-succinyltransferase</fullName>
        <shortName evidence="1">THDP succinyltransferase</shortName>
        <shortName evidence="1">THP succinyltransferase</shortName>
        <shortName evidence="1">Tetrahydropicolinate succinylase</shortName>
    </alternativeName>
</protein>
<evidence type="ECO:0000255" key="1">
    <source>
        <dbReference type="HAMAP-Rule" id="MF_00811"/>
    </source>
</evidence>
<feature type="chain" id="PRO_1000047128" description="2,3,4,5-tetrahydropyridine-2,6-dicarboxylate N-succinyltransferase">
    <location>
        <begin position="1"/>
        <end position="275"/>
    </location>
</feature>
<feature type="binding site" evidence="1">
    <location>
        <position position="106"/>
    </location>
    <ligand>
        <name>substrate</name>
    </ligand>
</feature>
<feature type="binding site" evidence="1">
    <location>
        <position position="143"/>
    </location>
    <ligand>
        <name>substrate</name>
    </ligand>
</feature>
<keyword id="KW-0012">Acyltransferase</keyword>
<keyword id="KW-0028">Amino-acid biosynthesis</keyword>
<keyword id="KW-0963">Cytoplasm</keyword>
<keyword id="KW-0220">Diaminopimelate biosynthesis</keyword>
<keyword id="KW-0457">Lysine biosynthesis</keyword>
<keyword id="KW-0677">Repeat</keyword>
<keyword id="KW-0808">Transferase</keyword>
<proteinExistence type="inferred from homology"/>
<accession>A2SB60</accession>